<feature type="chain" id="PRO_0000060304" description="Putative ABC transporter permease protein MJ0087">
    <location>
        <begin position="1"/>
        <end position="349"/>
    </location>
</feature>
<feature type="transmembrane region" description="Helical" evidence="1">
    <location>
        <begin position="15"/>
        <end position="35"/>
    </location>
</feature>
<feature type="transmembrane region" description="Helical" evidence="1">
    <location>
        <begin position="69"/>
        <end position="89"/>
    </location>
</feature>
<feature type="transmembrane region" description="Helical" evidence="1">
    <location>
        <begin position="100"/>
        <end position="120"/>
    </location>
</feature>
<feature type="transmembrane region" description="Helical" evidence="1">
    <location>
        <begin position="135"/>
        <end position="155"/>
    </location>
</feature>
<feature type="transmembrane region" description="Helical" evidence="1">
    <location>
        <begin position="166"/>
        <end position="186"/>
    </location>
</feature>
<feature type="transmembrane region" description="Helical" evidence="1">
    <location>
        <begin position="206"/>
        <end position="226"/>
    </location>
</feature>
<feature type="transmembrane region" description="Helical" evidence="1">
    <location>
        <begin position="254"/>
        <end position="274"/>
    </location>
</feature>
<feature type="transmembrane region" description="Helical" evidence="1">
    <location>
        <begin position="295"/>
        <end position="315"/>
    </location>
</feature>
<feature type="transmembrane region" description="Helical" evidence="1">
    <location>
        <begin position="318"/>
        <end position="338"/>
    </location>
</feature>
<comment type="function">
    <text>Probably part of a binding-protein-dependent transport system. Probably responsible for the translocation of the substrate across the membrane.</text>
</comment>
<comment type="subcellular location">
    <subcellularLocation>
        <location evidence="2">Cell membrane</location>
        <topology evidence="2">Multi-pass membrane protein</topology>
    </subcellularLocation>
</comment>
<comment type="similarity">
    <text evidence="2">Belongs to the binding-protein-dependent transport system permease family. FecCD subfamily.</text>
</comment>
<dbReference type="EMBL" id="L77117">
    <property type="protein sequence ID" value="AAB98069.1"/>
    <property type="molecule type" value="Genomic_DNA"/>
</dbReference>
<dbReference type="PIR" id="G64310">
    <property type="entry name" value="G64310"/>
</dbReference>
<dbReference type="RefSeq" id="WP_010869579.1">
    <property type="nucleotide sequence ID" value="NC_000909.1"/>
</dbReference>
<dbReference type="SMR" id="Q57552"/>
<dbReference type="FunCoup" id="Q57552">
    <property type="interactions" value="13"/>
</dbReference>
<dbReference type="STRING" id="243232.MJ_0087"/>
<dbReference type="PaxDb" id="243232-MJ_0087"/>
<dbReference type="EnsemblBacteria" id="AAB98069">
    <property type="protein sequence ID" value="AAB98069"/>
    <property type="gene ID" value="MJ_0087"/>
</dbReference>
<dbReference type="GeneID" id="1450926"/>
<dbReference type="KEGG" id="mja:MJ_0087"/>
<dbReference type="eggNOG" id="arCOG01007">
    <property type="taxonomic scope" value="Archaea"/>
</dbReference>
<dbReference type="HOGENOM" id="CLU_013016_0_0_2"/>
<dbReference type="InParanoid" id="Q57552"/>
<dbReference type="OrthoDB" id="27848at2157"/>
<dbReference type="PhylomeDB" id="Q57552"/>
<dbReference type="Proteomes" id="UP000000805">
    <property type="component" value="Chromosome"/>
</dbReference>
<dbReference type="GO" id="GO:0005886">
    <property type="term" value="C:plasma membrane"/>
    <property type="evidence" value="ECO:0000318"/>
    <property type="project" value="GO_Central"/>
</dbReference>
<dbReference type="GO" id="GO:0022857">
    <property type="term" value="F:transmembrane transporter activity"/>
    <property type="evidence" value="ECO:0000318"/>
    <property type="project" value="GO_Central"/>
</dbReference>
<dbReference type="GO" id="GO:0033214">
    <property type="term" value="P:siderophore-dependent iron import into cell"/>
    <property type="evidence" value="ECO:0000318"/>
    <property type="project" value="GO_Central"/>
</dbReference>
<dbReference type="CDD" id="cd06550">
    <property type="entry name" value="TM_ABC_iron-siderophores_like"/>
    <property type="match status" value="1"/>
</dbReference>
<dbReference type="FunFam" id="1.10.3470.10:FF:000001">
    <property type="entry name" value="Vitamin B12 ABC transporter permease BtuC"/>
    <property type="match status" value="1"/>
</dbReference>
<dbReference type="Gene3D" id="1.10.3470.10">
    <property type="entry name" value="ABC transporter involved in vitamin B12 uptake, BtuC"/>
    <property type="match status" value="1"/>
</dbReference>
<dbReference type="InterPro" id="IPR037294">
    <property type="entry name" value="ABC_BtuC-like"/>
</dbReference>
<dbReference type="InterPro" id="IPR000522">
    <property type="entry name" value="ABC_transptr_permease_BtuC"/>
</dbReference>
<dbReference type="PANTHER" id="PTHR30472:SF25">
    <property type="entry name" value="ABC TRANSPORTER PERMEASE PROTEIN MJ0876-RELATED"/>
    <property type="match status" value="1"/>
</dbReference>
<dbReference type="PANTHER" id="PTHR30472">
    <property type="entry name" value="FERRIC ENTEROBACTIN TRANSPORT SYSTEM PERMEASE PROTEIN"/>
    <property type="match status" value="1"/>
</dbReference>
<dbReference type="Pfam" id="PF01032">
    <property type="entry name" value="FecCD"/>
    <property type="match status" value="1"/>
</dbReference>
<dbReference type="SUPFAM" id="SSF81345">
    <property type="entry name" value="ABC transporter involved in vitamin B12 uptake, BtuC"/>
    <property type="match status" value="1"/>
</dbReference>
<proteinExistence type="inferred from homology"/>
<evidence type="ECO:0000255" key="1"/>
<evidence type="ECO:0000305" key="2"/>
<sequence length="349" mass="38201">MDIPQKYKLYTKKKIIFGIILLITLFLSSIYALCVGDYKLTVNQVVNALMGYGKDDINLVIWNIRLPRIFAAIISGMSLAVAGAVMQCILRNPLASPFTMGISHGAMFGACFAIIMFGFGGAESTGRIFINNPYMITIFAFLGALIGVVVILLLAKLRGLTPEAMILAGVAMSSLFTAGTMLIQYFADDLQLAAMVYWTFGDLGRAIWTEIYIMAAVMIPSLIYFMYKRWDYNALEAGEETAKSLGVNTERTRLIGMLVASLLTSVNVAFLGIIGFVGLICPHIVRICIGGDYRFLIPISALFGAVLLLIADTFARTIIAPIVLPVGILTSFLGAPMFLYLLLKMYKRV</sequence>
<accession>Q57552</accession>
<gene>
    <name type="ordered locus">MJ0087</name>
</gene>
<protein>
    <recommendedName>
        <fullName>Putative ABC transporter permease protein MJ0087</fullName>
    </recommendedName>
</protein>
<keyword id="KW-1003">Cell membrane</keyword>
<keyword id="KW-0472">Membrane</keyword>
<keyword id="KW-1185">Reference proteome</keyword>
<keyword id="KW-0812">Transmembrane</keyword>
<keyword id="KW-1133">Transmembrane helix</keyword>
<keyword id="KW-0813">Transport</keyword>
<reference key="1">
    <citation type="journal article" date="1996" name="Science">
        <title>Complete genome sequence of the methanogenic archaeon, Methanococcus jannaschii.</title>
        <authorList>
            <person name="Bult C.J."/>
            <person name="White O."/>
            <person name="Olsen G.J."/>
            <person name="Zhou L."/>
            <person name="Fleischmann R.D."/>
            <person name="Sutton G.G."/>
            <person name="Blake J.A."/>
            <person name="FitzGerald L.M."/>
            <person name="Clayton R.A."/>
            <person name="Gocayne J.D."/>
            <person name="Kerlavage A.R."/>
            <person name="Dougherty B.A."/>
            <person name="Tomb J.-F."/>
            <person name="Adams M.D."/>
            <person name="Reich C.I."/>
            <person name="Overbeek R."/>
            <person name="Kirkness E.F."/>
            <person name="Weinstock K.G."/>
            <person name="Merrick J.M."/>
            <person name="Glodek A."/>
            <person name="Scott J.L."/>
            <person name="Geoghagen N.S.M."/>
            <person name="Weidman J.F."/>
            <person name="Fuhrmann J.L."/>
            <person name="Nguyen D."/>
            <person name="Utterback T.R."/>
            <person name="Kelley J.M."/>
            <person name="Peterson J.D."/>
            <person name="Sadow P.W."/>
            <person name="Hanna M.C."/>
            <person name="Cotton M.D."/>
            <person name="Roberts K.M."/>
            <person name="Hurst M.A."/>
            <person name="Kaine B.P."/>
            <person name="Borodovsky M."/>
            <person name="Klenk H.-P."/>
            <person name="Fraser C.M."/>
            <person name="Smith H.O."/>
            <person name="Woese C.R."/>
            <person name="Venter J.C."/>
        </authorList>
    </citation>
    <scope>NUCLEOTIDE SEQUENCE [LARGE SCALE GENOMIC DNA]</scope>
    <source>
        <strain>ATCC 43067 / DSM 2661 / JAL-1 / JCM 10045 / NBRC 100440</strain>
    </source>
</reference>
<organism>
    <name type="scientific">Methanocaldococcus jannaschii (strain ATCC 43067 / DSM 2661 / JAL-1 / JCM 10045 / NBRC 100440)</name>
    <name type="common">Methanococcus jannaschii</name>
    <dbReference type="NCBI Taxonomy" id="243232"/>
    <lineage>
        <taxon>Archaea</taxon>
        <taxon>Methanobacteriati</taxon>
        <taxon>Methanobacteriota</taxon>
        <taxon>Methanomada group</taxon>
        <taxon>Methanococci</taxon>
        <taxon>Methanococcales</taxon>
        <taxon>Methanocaldococcaceae</taxon>
        <taxon>Methanocaldococcus</taxon>
    </lineage>
</organism>
<name>Y087_METJA</name>